<comment type="function">
    <text evidence="6">Highly reducing polyketide synthase; part of the gene cluster that mediates the biosynthesis of the lipopeptides W493 A and B (PubMed:25412204). W493 A and B consist of six amino acid residues D-allo-thr, L-Ala, D-Ala, L-Gln, D-Tyr, and L-Val/L-Ile linked to a 3-hydroxy-4-methyltetradecanoic acid polyketide chain (PubMed:25412204). The biosynthesis starts with formation of the linear polyketide chain by the highly reducing polyketide synthase PKS40 (PubMed:25412204). The gene cluster contains a putative acyl-CoA ligase (FPSE_09184) for formation of a CoA thioester polyketide. The thiol bond could be hydrolyzed by the putative thioesterase (FPSE_09186) and then accepted by the first T domain in module 1 of NRPS32 (PubMed:25412204). The second T domain is responsible for accepting a threonine, which is adenylated by the A domain and epimerized to the D-allo-threonine formed by the E domain. The five successive modules incorporate Ala, Ala, Gln, Tyr, and Val/Ile into the final product, which is released by cyclization (PubMed:25412204).</text>
</comment>
<comment type="pathway">
    <text evidence="6">Secondary metabolite biosynthesis.</text>
</comment>
<comment type="domain">
    <text evidence="8">Multidomain protein; including a ketosynthase (KS) that catalyzes repeated decarboxylative condensation to elongate the polyketide backbone; a malonyl-CoA:ACP transacylase (MAT) that selects and transfers the extender unit malonyl-CoA; a dehydratase (DH) domain that reduces hydroxyl groups to enoyl groups; a methyltransferase (CMeT) domain responsible for the incorporation of methyl groups; an enoylreductase (ER) domain that reduces enoyl groups to alkyl group; a ketoreductase (KR) domain that catalyzes beta-ketoreduction steps; and an acyl-carrier protein (ACP) that serves as the tether of the growing and completed polyketide via its phosphopantetheinyl arm.</text>
</comment>
<comment type="disruption phenotype">
    <text evidence="6">impairs the production of W493 A and B.</text>
</comment>
<reference key="1">
    <citation type="journal article" date="2012" name="PLoS Pathog.">
        <title>Comparative pathogenomics reveals horizontally acquired novel virulence genes in fungi infecting cereal hosts.</title>
        <authorList>
            <person name="Gardiner D.M."/>
            <person name="McDonald M.C."/>
            <person name="Covarelli L."/>
            <person name="Solomon P.S."/>
            <person name="Rusu A.G."/>
            <person name="Marshall M."/>
            <person name="Kazan K."/>
            <person name="Chakraborty S."/>
            <person name="McDonald B.A."/>
            <person name="Manners J.M."/>
        </authorList>
    </citation>
    <scope>NUCLEOTIDE SEQUENCE [LARGE SCALE GENOMIC DNA]</scope>
    <source>
        <strain>CS3096</strain>
    </source>
</reference>
<reference key="2">
    <citation type="journal article" date="2014" name="J. Nat. Prod.">
        <title>Identification of the biosynthetic gene clusters for the lipopeptides fusaristatin A and W493 B in Fusarium graminearum and F. pseudograminearum.</title>
        <authorList>
            <person name="Soerensen J.L."/>
            <person name="Sondergaard T.E."/>
            <person name="Covarelli L."/>
            <person name="Fuertes P.R."/>
            <person name="Hansen F.T."/>
            <person name="Frandsen R.J."/>
            <person name="Saei W."/>
            <person name="Lukassen M.B."/>
            <person name="Wimmer R."/>
            <person name="Nielsen K.F."/>
            <person name="Gardiner D.M."/>
            <person name="Giese H."/>
        </authorList>
    </citation>
    <scope>IDENTIFICATION</scope>
    <scope>FUNCTION</scope>
    <scope>DISRUPTION PHENOTYPE</scope>
    <scope>PATHWAY</scope>
</reference>
<proteinExistence type="inferred from homology"/>
<dbReference type="EC" id="2.3.1.-" evidence="8"/>
<dbReference type="EMBL" id="CM003198">
    <property type="protein sequence ID" value="EKJ70677.1"/>
    <property type="molecule type" value="Genomic_DNA"/>
</dbReference>
<dbReference type="SMR" id="K3VA96"/>
<dbReference type="EnsemblFungi" id="EKJ70677">
    <property type="protein sequence ID" value="EKJ70677"/>
    <property type="gene ID" value="FPSE_09187"/>
</dbReference>
<dbReference type="KEGG" id="fpu:FPSE_09187"/>
<dbReference type="eggNOG" id="KOG1202">
    <property type="taxonomic scope" value="Eukaryota"/>
</dbReference>
<dbReference type="HOGENOM" id="CLU_000022_31_1_1"/>
<dbReference type="OrthoDB" id="329835at2759"/>
<dbReference type="Proteomes" id="UP000007978">
    <property type="component" value="Chromosome 1"/>
</dbReference>
<dbReference type="GO" id="GO:0004315">
    <property type="term" value="F:3-oxoacyl-[acyl-carrier-protein] synthase activity"/>
    <property type="evidence" value="ECO:0007669"/>
    <property type="project" value="InterPro"/>
</dbReference>
<dbReference type="GO" id="GO:0004312">
    <property type="term" value="F:fatty acid synthase activity"/>
    <property type="evidence" value="ECO:0007669"/>
    <property type="project" value="TreeGrafter"/>
</dbReference>
<dbReference type="GO" id="GO:0008168">
    <property type="term" value="F:methyltransferase activity"/>
    <property type="evidence" value="ECO:0007669"/>
    <property type="project" value="UniProtKB-KW"/>
</dbReference>
<dbReference type="GO" id="GO:0016491">
    <property type="term" value="F:oxidoreductase activity"/>
    <property type="evidence" value="ECO:0007669"/>
    <property type="project" value="UniProtKB-KW"/>
</dbReference>
<dbReference type="GO" id="GO:0031177">
    <property type="term" value="F:phosphopantetheine binding"/>
    <property type="evidence" value="ECO:0007669"/>
    <property type="project" value="InterPro"/>
</dbReference>
<dbReference type="GO" id="GO:0006633">
    <property type="term" value="P:fatty acid biosynthetic process"/>
    <property type="evidence" value="ECO:0007669"/>
    <property type="project" value="InterPro"/>
</dbReference>
<dbReference type="GO" id="GO:0032259">
    <property type="term" value="P:methylation"/>
    <property type="evidence" value="ECO:0007669"/>
    <property type="project" value="UniProtKB-KW"/>
</dbReference>
<dbReference type="GO" id="GO:0030639">
    <property type="term" value="P:polyketide biosynthetic process"/>
    <property type="evidence" value="ECO:0007669"/>
    <property type="project" value="UniProtKB-ARBA"/>
</dbReference>
<dbReference type="CDD" id="cd02440">
    <property type="entry name" value="AdoMet_MTases"/>
    <property type="match status" value="1"/>
</dbReference>
<dbReference type="CDD" id="cd05195">
    <property type="entry name" value="enoyl_red"/>
    <property type="match status" value="1"/>
</dbReference>
<dbReference type="CDD" id="cd00833">
    <property type="entry name" value="PKS"/>
    <property type="match status" value="1"/>
</dbReference>
<dbReference type="FunFam" id="3.40.50.720:FF:000209">
    <property type="entry name" value="Polyketide synthase Pks12"/>
    <property type="match status" value="1"/>
</dbReference>
<dbReference type="FunFam" id="3.40.47.10:FF:000019">
    <property type="entry name" value="Polyketide synthase type I"/>
    <property type="match status" value="1"/>
</dbReference>
<dbReference type="Gene3D" id="3.30.70.3290">
    <property type="match status" value="1"/>
</dbReference>
<dbReference type="Gene3D" id="3.40.47.10">
    <property type="match status" value="1"/>
</dbReference>
<dbReference type="Gene3D" id="1.10.1200.10">
    <property type="entry name" value="ACP-like"/>
    <property type="match status" value="1"/>
</dbReference>
<dbReference type="Gene3D" id="3.40.366.10">
    <property type="entry name" value="Malonyl-Coenzyme A Acyl Carrier Protein, domain 2"/>
    <property type="match status" value="1"/>
</dbReference>
<dbReference type="Gene3D" id="3.90.180.10">
    <property type="entry name" value="Medium-chain alcohol dehydrogenases, catalytic domain"/>
    <property type="match status" value="1"/>
</dbReference>
<dbReference type="Gene3D" id="3.40.50.720">
    <property type="entry name" value="NAD(P)-binding Rossmann-like Domain"/>
    <property type="match status" value="2"/>
</dbReference>
<dbReference type="Gene3D" id="3.10.129.110">
    <property type="entry name" value="Polyketide synthase dehydratase"/>
    <property type="match status" value="1"/>
</dbReference>
<dbReference type="Gene3D" id="3.40.50.150">
    <property type="entry name" value="Vaccinia Virus protein VP39"/>
    <property type="match status" value="1"/>
</dbReference>
<dbReference type="InterPro" id="IPR001227">
    <property type="entry name" value="Ac_transferase_dom_sf"/>
</dbReference>
<dbReference type="InterPro" id="IPR036736">
    <property type="entry name" value="ACP-like_sf"/>
</dbReference>
<dbReference type="InterPro" id="IPR014043">
    <property type="entry name" value="Acyl_transferase_dom"/>
</dbReference>
<dbReference type="InterPro" id="IPR016035">
    <property type="entry name" value="Acyl_Trfase/lysoPLipase"/>
</dbReference>
<dbReference type="InterPro" id="IPR013154">
    <property type="entry name" value="ADH-like_N"/>
</dbReference>
<dbReference type="InterPro" id="IPR011032">
    <property type="entry name" value="GroES-like_sf"/>
</dbReference>
<dbReference type="InterPro" id="IPR018201">
    <property type="entry name" value="Ketoacyl_synth_AS"/>
</dbReference>
<dbReference type="InterPro" id="IPR014031">
    <property type="entry name" value="Ketoacyl_synth_C"/>
</dbReference>
<dbReference type="InterPro" id="IPR014030">
    <property type="entry name" value="Ketoacyl_synth_N"/>
</dbReference>
<dbReference type="InterPro" id="IPR016036">
    <property type="entry name" value="Malonyl_transacylase_ACP-bd"/>
</dbReference>
<dbReference type="InterPro" id="IPR013217">
    <property type="entry name" value="Methyltransf_12"/>
</dbReference>
<dbReference type="InterPro" id="IPR036291">
    <property type="entry name" value="NAD(P)-bd_dom_sf"/>
</dbReference>
<dbReference type="InterPro" id="IPR056501">
    <property type="entry name" value="NAD-bd_HRPKS_sdrA"/>
</dbReference>
<dbReference type="InterPro" id="IPR032821">
    <property type="entry name" value="PKS_assoc"/>
</dbReference>
<dbReference type="InterPro" id="IPR020841">
    <property type="entry name" value="PKS_Beta-ketoAc_synthase_dom"/>
</dbReference>
<dbReference type="InterPro" id="IPR042104">
    <property type="entry name" value="PKS_dehydratase_sf"/>
</dbReference>
<dbReference type="InterPro" id="IPR020807">
    <property type="entry name" value="PKS_DH"/>
</dbReference>
<dbReference type="InterPro" id="IPR049551">
    <property type="entry name" value="PKS_DH_C"/>
</dbReference>
<dbReference type="InterPro" id="IPR049552">
    <property type="entry name" value="PKS_DH_N"/>
</dbReference>
<dbReference type="InterPro" id="IPR020843">
    <property type="entry name" value="PKS_ER"/>
</dbReference>
<dbReference type="InterPro" id="IPR013968">
    <property type="entry name" value="PKS_KR"/>
</dbReference>
<dbReference type="InterPro" id="IPR049900">
    <property type="entry name" value="PKS_mFAS_DH"/>
</dbReference>
<dbReference type="InterPro" id="IPR050091">
    <property type="entry name" value="PKS_NRPS_Biosynth_Enz"/>
</dbReference>
<dbReference type="InterPro" id="IPR020806">
    <property type="entry name" value="PKS_PP-bd"/>
</dbReference>
<dbReference type="InterPro" id="IPR009081">
    <property type="entry name" value="PP-bd_ACP"/>
</dbReference>
<dbReference type="InterPro" id="IPR006162">
    <property type="entry name" value="Ppantetheine_attach_site"/>
</dbReference>
<dbReference type="InterPro" id="IPR029063">
    <property type="entry name" value="SAM-dependent_MTases_sf"/>
</dbReference>
<dbReference type="InterPro" id="IPR016039">
    <property type="entry name" value="Thiolase-like"/>
</dbReference>
<dbReference type="PANTHER" id="PTHR43775:SF29">
    <property type="entry name" value="ASPERFURANONE POLYKETIDE SYNTHASE AFOG-RELATED"/>
    <property type="match status" value="1"/>
</dbReference>
<dbReference type="PANTHER" id="PTHR43775">
    <property type="entry name" value="FATTY ACID SYNTHASE"/>
    <property type="match status" value="1"/>
</dbReference>
<dbReference type="Pfam" id="PF23297">
    <property type="entry name" value="ACP_SdgA_C"/>
    <property type="match status" value="1"/>
</dbReference>
<dbReference type="Pfam" id="PF00698">
    <property type="entry name" value="Acyl_transf_1"/>
    <property type="match status" value="1"/>
</dbReference>
<dbReference type="Pfam" id="PF08240">
    <property type="entry name" value="ADH_N"/>
    <property type="match status" value="1"/>
</dbReference>
<dbReference type="Pfam" id="PF13602">
    <property type="entry name" value="ADH_zinc_N_2"/>
    <property type="match status" value="1"/>
</dbReference>
<dbReference type="Pfam" id="PF16197">
    <property type="entry name" value="KAsynt_C_assoc"/>
    <property type="match status" value="1"/>
</dbReference>
<dbReference type="Pfam" id="PF00109">
    <property type="entry name" value="ketoacyl-synt"/>
    <property type="match status" value="1"/>
</dbReference>
<dbReference type="Pfam" id="PF02801">
    <property type="entry name" value="Ketoacyl-synt_C"/>
    <property type="match status" value="1"/>
</dbReference>
<dbReference type="Pfam" id="PF08659">
    <property type="entry name" value="KR"/>
    <property type="match status" value="1"/>
</dbReference>
<dbReference type="Pfam" id="PF08242">
    <property type="entry name" value="Methyltransf_12"/>
    <property type="match status" value="1"/>
</dbReference>
<dbReference type="Pfam" id="PF23114">
    <property type="entry name" value="NAD-bd_HRPKS_sdrA"/>
    <property type="match status" value="1"/>
</dbReference>
<dbReference type="Pfam" id="PF21089">
    <property type="entry name" value="PKS_DH_N"/>
    <property type="match status" value="1"/>
</dbReference>
<dbReference type="Pfam" id="PF14765">
    <property type="entry name" value="PS-DH"/>
    <property type="match status" value="1"/>
</dbReference>
<dbReference type="SMART" id="SM00827">
    <property type="entry name" value="PKS_AT"/>
    <property type="match status" value="1"/>
</dbReference>
<dbReference type="SMART" id="SM00826">
    <property type="entry name" value="PKS_DH"/>
    <property type="match status" value="1"/>
</dbReference>
<dbReference type="SMART" id="SM00829">
    <property type="entry name" value="PKS_ER"/>
    <property type="match status" value="1"/>
</dbReference>
<dbReference type="SMART" id="SM00822">
    <property type="entry name" value="PKS_KR"/>
    <property type="match status" value="1"/>
</dbReference>
<dbReference type="SMART" id="SM00825">
    <property type="entry name" value="PKS_KS"/>
    <property type="match status" value="1"/>
</dbReference>
<dbReference type="SMART" id="SM00823">
    <property type="entry name" value="PKS_PP"/>
    <property type="match status" value="1"/>
</dbReference>
<dbReference type="SUPFAM" id="SSF47336">
    <property type="entry name" value="ACP-like"/>
    <property type="match status" value="1"/>
</dbReference>
<dbReference type="SUPFAM" id="SSF52151">
    <property type="entry name" value="FabD/lysophospholipase-like"/>
    <property type="match status" value="1"/>
</dbReference>
<dbReference type="SUPFAM" id="SSF50129">
    <property type="entry name" value="GroES-like"/>
    <property type="match status" value="1"/>
</dbReference>
<dbReference type="SUPFAM" id="SSF51735">
    <property type="entry name" value="NAD(P)-binding Rossmann-fold domains"/>
    <property type="match status" value="2"/>
</dbReference>
<dbReference type="SUPFAM" id="SSF55048">
    <property type="entry name" value="Probable ACP-binding domain of malonyl-CoA ACP transacylase"/>
    <property type="match status" value="1"/>
</dbReference>
<dbReference type="SUPFAM" id="SSF53335">
    <property type="entry name" value="S-adenosyl-L-methionine-dependent methyltransferases"/>
    <property type="match status" value="1"/>
</dbReference>
<dbReference type="SUPFAM" id="SSF53901">
    <property type="entry name" value="Thiolase-like"/>
    <property type="match status" value="1"/>
</dbReference>
<dbReference type="PROSITE" id="PS50075">
    <property type="entry name" value="CARRIER"/>
    <property type="match status" value="1"/>
</dbReference>
<dbReference type="PROSITE" id="PS00606">
    <property type="entry name" value="KS3_1"/>
    <property type="match status" value="1"/>
</dbReference>
<dbReference type="PROSITE" id="PS52004">
    <property type="entry name" value="KS3_2"/>
    <property type="match status" value="1"/>
</dbReference>
<dbReference type="PROSITE" id="PS00012">
    <property type="entry name" value="PHOSPHOPANTETHEINE"/>
    <property type="match status" value="1"/>
</dbReference>
<dbReference type="PROSITE" id="PS52019">
    <property type="entry name" value="PKS_MFAS_DH"/>
    <property type="match status" value="1"/>
</dbReference>
<organism>
    <name type="scientific">Fusarium pseudograminearum (strain CS3096)</name>
    <name type="common">Wheat and barley crown-rot fungus</name>
    <dbReference type="NCBI Taxonomy" id="1028729"/>
    <lineage>
        <taxon>Eukaryota</taxon>
        <taxon>Fungi</taxon>
        <taxon>Dikarya</taxon>
        <taxon>Ascomycota</taxon>
        <taxon>Pezizomycotina</taxon>
        <taxon>Sordariomycetes</taxon>
        <taxon>Hypocreomycetidae</taxon>
        <taxon>Hypocreales</taxon>
        <taxon>Nectriaceae</taxon>
        <taxon>Fusarium</taxon>
    </lineage>
</organism>
<evidence type="ECO:0000255" key="1"/>
<evidence type="ECO:0000255" key="2">
    <source>
        <dbReference type="PROSITE-ProRule" id="PRU00258"/>
    </source>
</evidence>
<evidence type="ECO:0000255" key="3">
    <source>
        <dbReference type="PROSITE-ProRule" id="PRU01348"/>
    </source>
</evidence>
<evidence type="ECO:0000255" key="4">
    <source>
        <dbReference type="PROSITE-ProRule" id="PRU01363"/>
    </source>
</evidence>
<evidence type="ECO:0000256" key="5">
    <source>
        <dbReference type="SAM" id="MobiDB-lite"/>
    </source>
</evidence>
<evidence type="ECO:0000269" key="6">
    <source>
    </source>
</evidence>
<evidence type="ECO:0000303" key="7">
    <source>
    </source>
</evidence>
<evidence type="ECO:0000305" key="8">
    <source>
    </source>
</evidence>
<sequence length="2564" mass="279195">MAPNMTAPEPIAIIGMSCRFPGGASEPSRLWDTLSEGKSAWSEVPEDRFNMKAFYQRGDPHASTTNTAGGHFLDEDLSKFDSNFFGVKPLEARAWDPQQRLTLELAYEAFENAGLTIPQLWGSNTGVYVGQWSSDYSEILARDPEYQELYHTLGAGPAITSNRVSFFFNLRGPSFTVDTGCSSSLVALHNAVQSLRNGESTMSLVGGVNVLLDPQRFTYQSKLKMFSPDGRSFSFDHRANGYGRGEGCGCVVLKPLSLAVKDGDRIRAVIRNSALNQDGRTPQGISVPSMVAQEELIRRAYAEVGLVPTETDYVEAHGTGTAVGDPIEAQAIAAVLAQTRKPGQEPLSLASVKGNIGHTESAAGIAGLIKSVLMLENQAIPPQVNYEKPNPKIPLDKWNLQIPIRFEEKQLRRISVNSFGYGGTNAHVIVDRVDEHNHSNGTNGTNGTHHHNGTNGSNGNGTNGTNGTNGTDGFHDTESISDSISDRPRVFVLSGAEEQSCHQNAERLAQYLTKLPASLLEDSDGFLDKLAVSVNKRTVHDYSASVIAYDGEDLLAQLDVLQQTPVAIRAPVKGGARVGYVFGGQGAQYYSMGREMIKSWTPFRQSLDRANAHLKTMGCQWDLLTELSHEKAQDSHVDEPEYGQTLSTAVQLALVDTLVATKMRPTSVVGHSSGEIAAAYAAGALSFEDALTVAYHRGRLTSQLISTGISGGMLAVGSSPDAVQDYIEQVKATTKANVKIACYNSPTSVTLSGDSEAINAISELLQDDDVFNRKLKTQGAAYHSQMMQAMEEEYRSAIAYIQPRPVDAPVTMMSSLLGKKLPAGFLLDGDYWARNLVSPVLFAGALRGIMVGDEHDGSSQHSPQVDLLLEIGPHATMQGAVKETLKGLGSSVRIQYLSCLKRKTSAAENMLRTLADLFALGASVDLHYANAGFRTKLPPILKDLPPYAFNHDQRLWHDGRISHEFTHRQFLPHELLGNLSADVNHTEPRWRRFLRLKELPWLQHHIVQGQVIFPAAGYLAMAMEAMRRFTAFETENQSKATAGYSFRNTSFSKALVLREDDADTEICLSLRPEARSARNSWQDWKEFRVFSISPGKGWSEHCRGRIRAVVDQGILAEALKDTTGVKDRIAASVPHHITSNRLYATARQVGMEWYGPFDNVVNLQARTDLSVATNRMPTLLSSAHPFGLSTYVVHPGMLDSTLFHGLVASVLVEQEVKAPVVPTFLEQLTISTAIQVPEGEELRTYSVSREEGSCWSAQVELNGESVISFHGLRTAQLPSDVVNTRPHQLAHSPEWVCHYPSMTREQLIDTCINSVPAGSARQRNIVLYADVRAHVERALSHVQPDQVASGHEQSWYNWMKSFLATEPDSSDVVSEAREATKSEKFVGFDAVKIIGENLEQLLTGEVTSLSLLSTNDMLERLYSEERNQRCYTQISAYCKAVGLYNPALKVLEVGGGTASATLPFLQALSHQGHPLVAQYDFTDLSTAFFAAARERLGQYGHNVNYEAFDLAQDPETQGFEPGSYDIIVACNVVHATPSIASSLEHIRQLLRPGGTLVLMEITNGDPFYQLIFGSLSGWWSGVSEGRESTAILSEYDWKNVLAEQGYQSDPIMVGDYATSEGGTISVIFAKTPLESRRDHLSETSLHFATDLFADSSAGYLDNVAEHLGQKSELSLRQITTGNLESIKDIDSTVVVIDPETIEALAGRMDASLWEKFQKCALSCKGLLLVSRGATGSSVVPEGALAVGFARSMRLEQHGIRYITLDLDPSVDRDANELSRVLAQLLTSETFDFDRTISDADYEFAERKGQLHVNRLFPNVKLEESVAHSTRRSKPEQTEFLDTSRPLKVELGVDGLLETFRWVDDHQHARSLAPDEVRIECRAASINFRDVLIATGGLGGAGTMMNDCAGTVVEVGSNMASRYSVGDRVCSYYAQSYNNYPIVDGQHCAKIPDNVSFALGASLPIVWATTYHSLVNVAKLKAGESILIHAAAGAVGQAAVILAQHLGAVVYATCGSQEKRERLESMGVNPSHIFTSRSPAFGPALRAATNNKGVNVILNSLAGELFRESLECLTSFGRFIEIGKKDFLDDALMPTKFLLQNITFACVDLVQMINEDKPLVHGLLNDVVELVASGQLKDEVNLQLYKLGEIESAFRLISAGKHMGKVILTVDQGETVLALPATPNIPKLLPDATYLLVGGFGGLGVRLIRWLASRGAKTIVTMSRSGAKSPAAKTCIEEMDSLGVRIIAKSCDISSKEALQVVVKELEDVDGLAPVRGVINAAMALEDAMFDQMTHQQWVSSLAPKVAGTRNLDEVLPNYMDFFVVLSSIAGIIGHQAQANYAAACTFQDAFMHYRRSQGRASFAIDVGVVSDAGFVSEAPAVFSNMKRQGFSFISVAELLATLDYALSNDGPDCQASIGVMAEASPNNAEWLEQRRISHLVKDSANGAAGLNEGSGSDADHIGHIRSAKTAEEALDAVGQAVLAELSKLTVTPVDRILPHRTLDSYGVDSLVAVELRNWVVAIVAADLSLLLIRESRSIEELIHLVAGKSRLVPAKLQDAVSKLA</sequence>
<name>W4931_FUSPC</name>
<keyword id="KW-0012">Acyltransferase</keyword>
<keyword id="KW-0489">Methyltransferase</keyword>
<keyword id="KW-0511">Multifunctional enzyme</keyword>
<keyword id="KW-0521">NADP</keyword>
<keyword id="KW-0560">Oxidoreductase</keyword>
<keyword id="KW-0596">Phosphopantetheine</keyword>
<keyword id="KW-0597">Phosphoprotein</keyword>
<keyword id="KW-1185">Reference proteome</keyword>
<keyword id="KW-0949">S-adenosyl-L-methionine</keyword>
<keyword id="KW-0808">Transferase</keyword>
<gene>
    <name evidence="7" type="primary">PKS40</name>
    <name type="ORF">FPSE_09187</name>
</gene>
<protein>
    <recommendedName>
        <fullName evidence="7">Highly reducing polyketide synthase 40</fullName>
        <shortName evidence="7">HR-PKS PKS40</shortName>
        <ecNumber evidence="8">2.3.1.-</ecNumber>
    </recommendedName>
    <alternativeName>
        <fullName evidence="7">W493 A and B biosynthesis cluster protein PKS40</fullName>
    </alternativeName>
</protein>
<feature type="chain" id="PRO_0000445364" description="Highly reducing polyketide synthase 40">
    <location>
        <begin position="1"/>
        <end position="2564"/>
    </location>
</feature>
<feature type="domain" description="Ketosynthase family 3 (KS3)" evidence="3 8">
    <location>
        <begin position="8"/>
        <end position="432"/>
    </location>
</feature>
<feature type="domain" description="PKS/mFAS DH" evidence="4">
    <location>
        <begin position="973"/>
        <end position="1283"/>
    </location>
</feature>
<feature type="domain" description="Carrier" evidence="2">
    <location>
        <begin position="2472"/>
        <end position="2549"/>
    </location>
</feature>
<feature type="region of interest" description="Disordered" evidence="5">
    <location>
        <begin position="435"/>
        <end position="482"/>
    </location>
</feature>
<feature type="region of interest" description="Malonyl-CoA:ACP transacylase (MAT) domain" evidence="1 8">
    <location>
        <begin position="580"/>
        <end position="914"/>
    </location>
</feature>
<feature type="region of interest" description="Dehydratase (DH) domain" evidence="1 8">
    <location>
        <begin position="973"/>
        <end position="1280"/>
    </location>
</feature>
<feature type="region of interest" description="N-terminal hotdog fold" evidence="4">
    <location>
        <begin position="973"/>
        <end position="1113"/>
    </location>
</feature>
<feature type="region of interest" description="C-terminal hotdog fold" evidence="4">
    <location>
        <begin position="1130"/>
        <end position="1283"/>
    </location>
</feature>
<feature type="region of interest" description="Methyltransferase (CMet) domain" evidence="1 8">
    <location>
        <begin position="1451"/>
        <end position="1556"/>
    </location>
</feature>
<feature type="region of interest" description="Enoyl reductase (ER) domain" evidence="1 8">
    <location>
        <begin position="1854"/>
        <end position="2167"/>
    </location>
</feature>
<feature type="region of interest" description="Ketoreductase (KR) domain" evidence="1 8">
    <location>
        <begin position="2191"/>
        <end position="2370"/>
    </location>
</feature>
<feature type="compositionally biased region" description="Low complexity" evidence="5">
    <location>
        <begin position="439"/>
        <end position="455"/>
    </location>
</feature>
<feature type="compositionally biased region" description="Basic and acidic residues" evidence="5">
    <location>
        <begin position="473"/>
        <end position="482"/>
    </location>
</feature>
<feature type="active site" description="For beta-ketoacyl synthase activity" evidence="3">
    <location>
        <position position="181"/>
    </location>
</feature>
<feature type="active site" description="For beta-ketoacyl synthase activity" evidence="3">
    <location>
        <position position="317"/>
    </location>
</feature>
<feature type="active site" description="For beta-ketoacyl synthase activity" evidence="3">
    <location>
        <position position="358"/>
    </location>
</feature>
<feature type="active site" description="Proton acceptor; for dehydratase activity" evidence="4">
    <location>
        <position position="1005"/>
    </location>
</feature>
<feature type="active site" description="Proton donor; for dehydratase activity" evidence="4">
    <location>
        <position position="1199"/>
    </location>
</feature>
<feature type="modified residue" description="O-(pantetheine 4'-phosphoryl)serine" evidence="2">
    <location>
        <position position="2509"/>
    </location>
</feature>
<accession>K3VA96</accession>